<sequence>MMTAEVTAADAEVLLAQPRGFCAGVDRAIDIVERALELHGAPIYVRHEIVHNRYVVEDLRGKGAVFIDELDQAPAGAIVVFSAHGVSQAVRGEAEARGLRVFDATCPLVTKVHIEVARMRAAGREIVMIGHKGHPEVEGTLGQAQGGMYLVETVEDVAALRVSDPGNLAYVTQTTLSVDDAAAVAGALKARFPGIVEPKKSDICYATQNRQDAVKLLAPECDLVLVVGSTNSSNSNRLREVAERKGVAAYLIDGAHAIDPAWLQGRRSIGITAGASAPEVLVQQVVERVRELGAVSVRTMPGLEESVAFPLPKGLSRKIAQTESLE</sequence>
<keyword id="KW-0004">4Fe-4S</keyword>
<keyword id="KW-0408">Iron</keyword>
<keyword id="KW-0411">Iron-sulfur</keyword>
<keyword id="KW-0414">Isoprene biosynthesis</keyword>
<keyword id="KW-0479">Metal-binding</keyword>
<keyword id="KW-0560">Oxidoreductase</keyword>
<dbReference type="EC" id="1.17.7.4" evidence="1"/>
<dbReference type="EMBL" id="BX640447">
    <property type="protein sequence ID" value="CAE33748.1"/>
    <property type="molecule type" value="Genomic_DNA"/>
</dbReference>
<dbReference type="SMR" id="Q7WHF2"/>
<dbReference type="KEGG" id="bbr:BB3256"/>
<dbReference type="eggNOG" id="COG0761">
    <property type="taxonomic scope" value="Bacteria"/>
</dbReference>
<dbReference type="HOGENOM" id="CLU_027486_1_1_4"/>
<dbReference type="UniPathway" id="UPA00056">
    <property type="reaction ID" value="UER00097"/>
</dbReference>
<dbReference type="UniPathway" id="UPA00059">
    <property type="reaction ID" value="UER00105"/>
</dbReference>
<dbReference type="Proteomes" id="UP000001027">
    <property type="component" value="Chromosome"/>
</dbReference>
<dbReference type="GO" id="GO:0051539">
    <property type="term" value="F:4 iron, 4 sulfur cluster binding"/>
    <property type="evidence" value="ECO:0007669"/>
    <property type="project" value="UniProtKB-UniRule"/>
</dbReference>
<dbReference type="GO" id="GO:0051745">
    <property type="term" value="F:4-hydroxy-3-methylbut-2-enyl diphosphate reductase activity"/>
    <property type="evidence" value="ECO:0007669"/>
    <property type="project" value="UniProtKB-UniRule"/>
</dbReference>
<dbReference type="GO" id="GO:0046872">
    <property type="term" value="F:metal ion binding"/>
    <property type="evidence" value="ECO:0007669"/>
    <property type="project" value="UniProtKB-KW"/>
</dbReference>
<dbReference type="GO" id="GO:0050992">
    <property type="term" value="P:dimethylallyl diphosphate biosynthetic process"/>
    <property type="evidence" value="ECO:0007669"/>
    <property type="project" value="UniProtKB-UniRule"/>
</dbReference>
<dbReference type="GO" id="GO:0019288">
    <property type="term" value="P:isopentenyl diphosphate biosynthetic process, methylerythritol 4-phosphate pathway"/>
    <property type="evidence" value="ECO:0007669"/>
    <property type="project" value="UniProtKB-UniRule"/>
</dbReference>
<dbReference type="GO" id="GO:0016114">
    <property type="term" value="P:terpenoid biosynthetic process"/>
    <property type="evidence" value="ECO:0007669"/>
    <property type="project" value="UniProtKB-UniRule"/>
</dbReference>
<dbReference type="CDD" id="cd13944">
    <property type="entry name" value="lytB_ispH"/>
    <property type="match status" value="1"/>
</dbReference>
<dbReference type="Gene3D" id="3.40.50.11270">
    <property type="match status" value="1"/>
</dbReference>
<dbReference type="Gene3D" id="3.40.1010.20">
    <property type="entry name" value="4-hydroxy-3-methylbut-2-enyl diphosphate reductase, catalytic domain"/>
    <property type="match status" value="2"/>
</dbReference>
<dbReference type="HAMAP" id="MF_00191">
    <property type="entry name" value="IspH"/>
    <property type="match status" value="1"/>
</dbReference>
<dbReference type="InterPro" id="IPR003451">
    <property type="entry name" value="LytB/IspH"/>
</dbReference>
<dbReference type="NCBIfam" id="TIGR00216">
    <property type="entry name" value="ispH_lytB"/>
    <property type="match status" value="1"/>
</dbReference>
<dbReference type="NCBIfam" id="NF002188">
    <property type="entry name" value="PRK01045.1-2"/>
    <property type="match status" value="1"/>
</dbReference>
<dbReference type="NCBIfam" id="NF002190">
    <property type="entry name" value="PRK01045.1-4"/>
    <property type="match status" value="1"/>
</dbReference>
<dbReference type="PANTHER" id="PTHR30426">
    <property type="entry name" value="4-HYDROXY-3-METHYLBUT-2-ENYL DIPHOSPHATE REDUCTASE"/>
    <property type="match status" value="1"/>
</dbReference>
<dbReference type="PANTHER" id="PTHR30426:SF0">
    <property type="entry name" value="4-HYDROXY-3-METHYLBUT-2-ENYL DIPHOSPHATE REDUCTASE"/>
    <property type="match status" value="1"/>
</dbReference>
<dbReference type="Pfam" id="PF02401">
    <property type="entry name" value="LYTB"/>
    <property type="match status" value="1"/>
</dbReference>
<name>ISPH_BORBR</name>
<accession>Q7WHF2</accession>
<organism>
    <name type="scientific">Bordetella bronchiseptica (strain ATCC BAA-588 / NCTC 13252 / RB50)</name>
    <name type="common">Alcaligenes bronchisepticus</name>
    <dbReference type="NCBI Taxonomy" id="257310"/>
    <lineage>
        <taxon>Bacteria</taxon>
        <taxon>Pseudomonadati</taxon>
        <taxon>Pseudomonadota</taxon>
        <taxon>Betaproteobacteria</taxon>
        <taxon>Burkholderiales</taxon>
        <taxon>Alcaligenaceae</taxon>
        <taxon>Bordetella</taxon>
    </lineage>
</organism>
<evidence type="ECO:0000255" key="1">
    <source>
        <dbReference type="HAMAP-Rule" id="MF_00191"/>
    </source>
</evidence>
<proteinExistence type="inferred from homology"/>
<feature type="chain" id="PRO_0000128781" description="4-hydroxy-3-methylbut-2-enyl diphosphate reductase">
    <location>
        <begin position="1"/>
        <end position="326"/>
    </location>
</feature>
<feature type="active site" description="Proton donor" evidence="1">
    <location>
        <position position="136"/>
    </location>
</feature>
<feature type="binding site" evidence="1">
    <location>
        <position position="22"/>
    </location>
    <ligand>
        <name>[4Fe-4S] cluster</name>
        <dbReference type="ChEBI" id="CHEBI:49883"/>
    </ligand>
</feature>
<feature type="binding site" evidence="1">
    <location>
        <position position="51"/>
    </location>
    <ligand>
        <name>(2E)-4-hydroxy-3-methylbut-2-enyl diphosphate</name>
        <dbReference type="ChEBI" id="CHEBI:128753"/>
    </ligand>
</feature>
<feature type="binding site" evidence="1">
    <location>
        <position position="51"/>
    </location>
    <ligand>
        <name>dimethylallyl diphosphate</name>
        <dbReference type="ChEBI" id="CHEBI:57623"/>
    </ligand>
</feature>
<feature type="binding site" evidence="1">
    <location>
        <position position="51"/>
    </location>
    <ligand>
        <name>isopentenyl diphosphate</name>
        <dbReference type="ChEBI" id="CHEBI:128769"/>
    </ligand>
</feature>
<feature type="binding site" evidence="1">
    <location>
        <position position="84"/>
    </location>
    <ligand>
        <name>(2E)-4-hydroxy-3-methylbut-2-enyl diphosphate</name>
        <dbReference type="ChEBI" id="CHEBI:128753"/>
    </ligand>
</feature>
<feature type="binding site" evidence="1">
    <location>
        <position position="84"/>
    </location>
    <ligand>
        <name>dimethylallyl diphosphate</name>
        <dbReference type="ChEBI" id="CHEBI:57623"/>
    </ligand>
</feature>
<feature type="binding site" evidence="1">
    <location>
        <position position="84"/>
    </location>
    <ligand>
        <name>isopentenyl diphosphate</name>
        <dbReference type="ChEBI" id="CHEBI:128769"/>
    </ligand>
</feature>
<feature type="binding site" evidence="1">
    <location>
        <position position="106"/>
    </location>
    <ligand>
        <name>[4Fe-4S] cluster</name>
        <dbReference type="ChEBI" id="CHEBI:49883"/>
    </ligand>
</feature>
<feature type="binding site" evidence="1">
    <location>
        <position position="134"/>
    </location>
    <ligand>
        <name>(2E)-4-hydroxy-3-methylbut-2-enyl diphosphate</name>
        <dbReference type="ChEBI" id="CHEBI:128753"/>
    </ligand>
</feature>
<feature type="binding site" evidence="1">
    <location>
        <position position="134"/>
    </location>
    <ligand>
        <name>dimethylallyl diphosphate</name>
        <dbReference type="ChEBI" id="CHEBI:57623"/>
    </ligand>
</feature>
<feature type="binding site" evidence="1">
    <location>
        <position position="134"/>
    </location>
    <ligand>
        <name>isopentenyl diphosphate</name>
        <dbReference type="ChEBI" id="CHEBI:128769"/>
    </ligand>
</feature>
<feature type="binding site" evidence="1">
    <location>
        <position position="174"/>
    </location>
    <ligand>
        <name>(2E)-4-hydroxy-3-methylbut-2-enyl diphosphate</name>
        <dbReference type="ChEBI" id="CHEBI:128753"/>
    </ligand>
</feature>
<feature type="binding site" evidence="1">
    <location>
        <position position="204"/>
    </location>
    <ligand>
        <name>[4Fe-4S] cluster</name>
        <dbReference type="ChEBI" id="CHEBI:49883"/>
    </ligand>
</feature>
<feature type="binding site" evidence="1">
    <location>
        <position position="232"/>
    </location>
    <ligand>
        <name>(2E)-4-hydroxy-3-methylbut-2-enyl diphosphate</name>
        <dbReference type="ChEBI" id="CHEBI:128753"/>
    </ligand>
</feature>
<feature type="binding site" evidence="1">
    <location>
        <position position="232"/>
    </location>
    <ligand>
        <name>dimethylallyl diphosphate</name>
        <dbReference type="ChEBI" id="CHEBI:57623"/>
    </ligand>
</feature>
<feature type="binding site" evidence="1">
    <location>
        <position position="232"/>
    </location>
    <ligand>
        <name>isopentenyl diphosphate</name>
        <dbReference type="ChEBI" id="CHEBI:128769"/>
    </ligand>
</feature>
<feature type="binding site" evidence="1">
    <location>
        <position position="233"/>
    </location>
    <ligand>
        <name>(2E)-4-hydroxy-3-methylbut-2-enyl diphosphate</name>
        <dbReference type="ChEBI" id="CHEBI:128753"/>
    </ligand>
</feature>
<feature type="binding site" evidence="1">
    <location>
        <position position="233"/>
    </location>
    <ligand>
        <name>dimethylallyl diphosphate</name>
        <dbReference type="ChEBI" id="CHEBI:57623"/>
    </ligand>
</feature>
<feature type="binding site" evidence="1">
    <location>
        <position position="233"/>
    </location>
    <ligand>
        <name>isopentenyl diphosphate</name>
        <dbReference type="ChEBI" id="CHEBI:128769"/>
    </ligand>
</feature>
<feature type="binding site" evidence="1">
    <location>
        <position position="234"/>
    </location>
    <ligand>
        <name>(2E)-4-hydroxy-3-methylbut-2-enyl diphosphate</name>
        <dbReference type="ChEBI" id="CHEBI:128753"/>
    </ligand>
</feature>
<feature type="binding site" evidence="1">
    <location>
        <position position="234"/>
    </location>
    <ligand>
        <name>dimethylallyl diphosphate</name>
        <dbReference type="ChEBI" id="CHEBI:57623"/>
    </ligand>
</feature>
<feature type="binding site" evidence="1">
    <location>
        <position position="234"/>
    </location>
    <ligand>
        <name>isopentenyl diphosphate</name>
        <dbReference type="ChEBI" id="CHEBI:128769"/>
    </ligand>
</feature>
<feature type="binding site" evidence="1">
    <location>
        <position position="276"/>
    </location>
    <ligand>
        <name>(2E)-4-hydroxy-3-methylbut-2-enyl diphosphate</name>
        <dbReference type="ChEBI" id="CHEBI:128753"/>
    </ligand>
</feature>
<feature type="binding site" evidence="1">
    <location>
        <position position="276"/>
    </location>
    <ligand>
        <name>dimethylallyl diphosphate</name>
        <dbReference type="ChEBI" id="CHEBI:57623"/>
    </ligand>
</feature>
<feature type="binding site" evidence="1">
    <location>
        <position position="276"/>
    </location>
    <ligand>
        <name>isopentenyl diphosphate</name>
        <dbReference type="ChEBI" id="CHEBI:128769"/>
    </ligand>
</feature>
<reference key="1">
    <citation type="journal article" date="2003" name="Nat. Genet.">
        <title>Comparative analysis of the genome sequences of Bordetella pertussis, Bordetella parapertussis and Bordetella bronchiseptica.</title>
        <authorList>
            <person name="Parkhill J."/>
            <person name="Sebaihia M."/>
            <person name="Preston A."/>
            <person name="Murphy L.D."/>
            <person name="Thomson N.R."/>
            <person name="Harris D.E."/>
            <person name="Holden M.T.G."/>
            <person name="Churcher C.M."/>
            <person name="Bentley S.D."/>
            <person name="Mungall K.L."/>
            <person name="Cerdeno-Tarraga A.-M."/>
            <person name="Temple L."/>
            <person name="James K.D."/>
            <person name="Harris B."/>
            <person name="Quail M.A."/>
            <person name="Achtman M."/>
            <person name="Atkin R."/>
            <person name="Baker S."/>
            <person name="Basham D."/>
            <person name="Bason N."/>
            <person name="Cherevach I."/>
            <person name="Chillingworth T."/>
            <person name="Collins M."/>
            <person name="Cronin A."/>
            <person name="Davis P."/>
            <person name="Doggett J."/>
            <person name="Feltwell T."/>
            <person name="Goble A."/>
            <person name="Hamlin N."/>
            <person name="Hauser H."/>
            <person name="Holroyd S."/>
            <person name="Jagels K."/>
            <person name="Leather S."/>
            <person name="Moule S."/>
            <person name="Norberczak H."/>
            <person name="O'Neil S."/>
            <person name="Ormond D."/>
            <person name="Price C."/>
            <person name="Rabbinowitsch E."/>
            <person name="Rutter S."/>
            <person name="Sanders M."/>
            <person name="Saunders D."/>
            <person name="Seeger K."/>
            <person name="Sharp S."/>
            <person name="Simmonds M."/>
            <person name="Skelton J."/>
            <person name="Squares R."/>
            <person name="Squares S."/>
            <person name="Stevens K."/>
            <person name="Unwin L."/>
            <person name="Whitehead S."/>
            <person name="Barrell B.G."/>
            <person name="Maskell D.J."/>
        </authorList>
    </citation>
    <scope>NUCLEOTIDE SEQUENCE [LARGE SCALE GENOMIC DNA]</scope>
    <source>
        <strain>ATCC BAA-588 / NCTC 13252 / RB50</strain>
    </source>
</reference>
<protein>
    <recommendedName>
        <fullName evidence="1">4-hydroxy-3-methylbut-2-enyl diphosphate reductase</fullName>
        <shortName evidence="1">HMBPP reductase</shortName>
        <ecNumber evidence="1">1.17.7.4</ecNumber>
    </recommendedName>
</protein>
<gene>
    <name evidence="1" type="primary">ispH</name>
    <name type="synonym">lytB</name>
    <name type="ordered locus">BB3256</name>
</gene>
<comment type="function">
    <text evidence="1">Catalyzes the conversion of 1-hydroxy-2-methyl-2-(E)-butenyl 4-diphosphate (HMBPP) into a mixture of isopentenyl diphosphate (IPP) and dimethylallyl diphosphate (DMAPP). Acts in the terminal step of the DOXP/MEP pathway for isoprenoid precursor biosynthesis.</text>
</comment>
<comment type="catalytic activity">
    <reaction evidence="1">
        <text>isopentenyl diphosphate + 2 oxidized [2Fe-2S]-[ferredoxin] + H2O = (2E)-4-hydroxy-3-methylbut-2-enyl diphosphate + 2 reduced [2Fe-2S]-[ferredoxin] + 2 H(+)</text>
        <dbReference type="Rhea" id="RHEA:24488"/>
        <dbReference type="Rhea" id="RHEA-COMP:10000"/>
        <dbReference type="Rhea" id="RHEA-COMP:10001"/>
        <dbReference type="ChEBI" id="CHEBI:15377"/>
        <dbReference type="ChEBI" id="CHEBI:15378"/>
        <dbReference type="ChEBI" id="CHEBI:33737"/>
        <dbReference type="ChEBI" id="CHEBI:33738"/>
        <dbReference type="ChEBI" id="CHEBI:128753"/>
        <dbReference type="ChEBI" id="CHEBI:128769"/>
        <dbReference type="EC" id="1.17.7.4"/>
    </reaction>
</comment>
<comment type="catalytic activity">
    <reaction evidence="1">
        <text>dimethylallyl diphosphate + 2 oxidized [2Fe-2S]-[ferredoxin] + H2O = (2E)-4-hydroxy-3-methylbut-2-enyl diphosphate + 2 reduced [2Fe-2S]-[ferredoxin] + 2 H(+)</text>
        <dbReference type="Rhea" id="RHEA:24825"/>
        <dbReference type="Rhea" id="RHEA-COMP:10000"/>
        <dbReference type="Rhea" id="RHEA-COMP:10001"/>
        <dbReference type="ChEBI" id="CHEBI:15377"/>
        <dbReference type="ChEBI" id="CHEBI:15378"/>
        <dbReference type="ChEBI" id="CHEBI:33737"/>
        <dbReference type="ChEBI" id="CHEBI:33738"/>
        <dbReference type="ChEBI" id="CHEBI:57623"/>
        <dbReference type="ChEBI" id="CHEBI:128753"/>
        <dbReference type="EC" id="1.17.7.4"/>
    </reaction>
</comment>
<comment type="cofactor">
    <cofactor evidence="1">
        <name>[4Fe-4S] cluster</name>
        <dbReference type="ChEBI" id="CHEBI:49883"/>
    </cofactor>
    <text evidence="1">Binds 1 [4Fe-4S] cluster per subunit.</text>
</comment>
<comment type="pathway">
    <text evidence="1">Isoprenoid biosynthesis; dimethylallyl diphosphate biosynthesis; dimethylallyl diphosphate from (2E)-4-hydroxy-3-methylbutenyl diphosphate: step 1/1.</text>
</comment>
<comment type="pathway">
    <text evidence="1">Isoprenoid biosynthesis; isopentenyl diphosphate biosynthesis via DXP pathway; isopentenyl diphosphate from 1-deoxy-D-xylulose 5-phosphate: step 6/6.</text>
</comment>
<comment type="similarity">
    <text evidence="1">Belongs to the IspH family.</text>
</comment>